<keyword id="KW-0808">Transferase</keyword>
<keyword id="KW-0819">tRNA processing</keyword>
<gene>
    <name evidence="1" type="primary">cmoB</name>
    <name type="ordered locus">ASA_2847</name>
</gene>
<protein>
    <recommendedName>
        <fullName evidence="1">tRNA U34 carboxymethyltransferase</fullName>
        <ecNumber evidence="1">2.5.1.-</ecNumber>
    </recommendedName>
</protein>
<comment type="function">
    <text evidence="1">Catalyzes carboxymethyl transfer from carboxy-S-adenosyl-L-methionine (Cx-SAM) to 5-hydroxyuridine (ho5U) to form 5-carboxymethoxyuridine (cmo5U) at position 34 in tRNAs.</text>
</comment>
<comment type="catalytic activity">
    <reaction evidence="1">
        <text>carboxy-S-adenosyl-L-methionine + 5-hydroxyuridine(34) in tRNA = 5-carboxymethoxyuridine(34) in tRNA + S-adenosyl-L-homocysteine + H(+)</text>
        <dbReference type="Rhea" id="RHEA:52848"/>
        <dbReference type="Rhea" id="RHEA-COMP:13381"/>
        <dbReference type="Rhea" id="RHEA-COMP:13383"/>
        <dbReference type="ChEBI" id="CHEBI:15378"/>
        <dbReference type="ChEBI" id="CHEBI:57856"/>
        <dbReference type="ChEBI" id="CHEBI:134278"/>
        <dbReference type="ChEBI" id="CHEBI:136877"/>
        <dbReference type="ChEBI" id="CHEBI:136879"/>
    </reaction>
</comment>
<comment type="subunit">
    <text evidence="1">Homotetramer.</text>
</comment>
<comment type="similarity">
    <text evidence="1">Belongs to the class I-like SAM-binding methyltransferase superfamily. CmoB family.</text>
</comment>
<proteinExistence type="inferred from homology"/>
<sequence length="325" mass="37121">MIDFANFYQLIAKNRLSHWLHTLPAQLHAWQHDNLHGDLPRWNRALNKLPTTAPGHIELQRGVEIGNSQSLSEGERKKVESLLRQFMPWRKGPFTVHGIHIDTEWRSDWKWDRVLPHISPLAGRYVLDVGCGSGYHLWRMVGEGAKLAVGIDPSPLFLCQFEAIRHFTGGDQRAHLLPLGIQELPDLRAFDTVFSMGVLYHRKSPIEHIEQLRNQLKDDGELVLETLVVDGGVNEVLVPTDRYGKMRNVWFIPSSAALKLWVERCGFTDVRIVDENMTSTDEQRRTDWMINESLSDYLDPADPALTVEGHPAPKRAVLIARKAKD</sequence>
<feature type="chain" id="PRO_0000313900" description="tRNA U34 carboxymethyltransferase">
    <location>
        <begin position="1"/>
        <end position="325"/>
    </location>
</feature>
<feature type="binding site" evidence="1">
    <location>
        <position position="91"/>
    </location>
    <ligand>
        <name>carboxy-S-adenosyl-L-methionine</name>
        <dbReference type="ChEBI" id="CHEBI:134278"/>
    </ligand>
</feature>
<feature type="binding site" evidence="1">
    <location>
        <position position="105"/>
    </location>
    <ligand>
        <name>carboxy-S-adenosyl-L-methionine</name>
        <dbReference type="ChEBI" id="CHEBI:134278"/>
    </ligand>
</feature>
<feature type="binding site" evidence="1">
    <location>
        <position position="110"/>
    </location>
    <ligand>
        <name>carboxy-S-adenosyl-L-methionine</name>
        <dbReference type="ChEBI" id="CHEBI:134278"/>
    </ligand>
</feature>
<feature type="binding site" evidence="1">
    <location>
        <position position="130"/>
    </location>
    <ligand>
        <name>carboxy-S-adenosyl-L-methionine</name>
        <dbReference type="ChEBI" id="CHEBI:134278"/>
    </ligand>
</feature>
<feature type="binding site" evidence="1">
    <location>
        <begin position="152"/>
        <end position="154"/>
    </location>
    <ligand>
        <name>carboxy-S-adenosyl-L-methionine</name>
        <dbReference type="ChEBI" id="CHEBI:134278"/>
    </ligand>
</feature>
<feature type="binding site" evidence="1">
    <location>
        <position position="196"/>
    </location>
    <ligand>
        <name>carboxy-S-adenosyl-L-methionine</name>
        <dbReference type="ChEBI" id="CHEBI:134278"/>
    </ligand>
</feature>
<feature type="binding site" evidence="1">
    <location>
        <position position="200"/>
    </location>
    <ligand>
        <name>carboxy-S-adenosyl-L-methionine</name>
        <dbReference type="ChEBI" id="CHEBI:134278"/>
    </ligand>
</feature>
<feature type="binding site" evidence="1">
    <location>
        <position position="315"/>
    </location>
    <ligand>
        <name>carboxy-S-adenosyl-L-methionine</name>
        <dbReference type="ChEBI" id="CHEBI:134278"/>
    </ligand>
</feature>
<reference key="1">
    <citation type="journal article" date="2008" name="BMC Genomics">
        <title>The genome of Aeromonas salmonicida subsp. salmonicida A449: insights into the evolution of a fish pathogen.</title>
        <authorList>
            <person name="Reith M.E."/>
            <person name="Singh R.K."/>
            <person name="Curtis B."/>
            <person name="Boyd J.M."/>
            <person name="Bouevitch A."/>
            <person name="Kimball J."/>
            <person name="Munholland J."/>
            <person name="Murphy C."/>
            <person name="Sarty D."/>
            <person name="Williams J."/>
            <person name="Nash J.H."/>
            <person name="Johnson S.C."/>
            <person name="Brown L.L."/>
        </authorList>
    </citation>
    <scope>NUCLEOTIDE SEQUENCE [LARGE SCALE GENOMIC DNA]</scope>
    <source>
        <strain>A449</strain>
    </source>
</reference>
<accession>A4SPN8</accession>
<evidence type="ECO:0000255" key="1">
    <source>
        <dbReference type="HAMAP-Rule" id="MF_01590"/>
    </source>
</evidence>
<name>CMOB_AERS4</name>
<organism>
    <name type="scientific">Aeromonas salmonicida (strain A449)</name>
    <dbReference type="NCBI Taxonomy" id="382245"/>
    <lineage>
        <taxon>Bacteria</taxon>
        <taxon>Pseudomonadati</taxon>
        <taxon>Pseudomonadota</taxon>
        <taxon>Gammaproteobacteria</taxon>
        <taxon>Aeromonadales</taxon>
        <taxon>Aeromonadaceae</taxon>
        <taxon>Aeromonas</taxon>
    </lineage>
</organism>
<dbReference type="EC" id="2.5.1.-" evidence="1"/>
<dbReference type="EMBL" id="CP000644">
    <property type="protein sequence ID" value="ABO90860.1"/>
    <property type="molecule type" value="Genomic_DNA"/>
</dbReference>
<dbReference type="RefSeq" id="WP_005313094.1">
    <property type="nucleotide sequence ID" value="NC_009348.1"/>
</dbReference>
<dbReference type="SMR" id="A4SPN8"/>
<dbReference type="STRING" id="29491.GCA_000820065_02219"/>
<dbReference type="KEGG" id="asa:ASA_2847"/>
<dbReference type="eggNOG" id="COG0500">
    <property type="taxonomic scope" value="Bacteria"/>
</dbReference>
<dbReference type="HOGENOM" id="CLU_052665_0_0_6"/>
<dbReference type="Proteomes" id="UP000000225">
    <property type="component" value="Chromosome"/>
</dbReference>
<dbReference type="GO" id="GO:0008168">
    <property type="term" value="F:methyltransferase activity"/>
    <property type="evidence" value="ECO:0007669"/>
    <property type="project" value="TreeGrafter"/>
</dbReference>
<dbReference type="GO" id="GO:0016765">
    <property type="term" value="F:transferase activity, transferring alkyl or aryl (other than methyl) groups"/>
    <property type="evidence" value="ECO:0007669"/>
    <property type="project" value="UniProtKB-UniRule"/>
</dbReference>
<dbReference type="GO" id="GO:0002098">
    <property type="term" value="P:tRNA wobble uridine modification"/>
    <property type="evidence" value="ECO:0007669"/>
    <property type="project" value="InterPro"/>
</dbReference>
<dbReference type="CDD" id="cd02440">
    <property type="entry name" value="AdoMet_MTases"/>
    <property type="match status" value="1"/>
</dbReference>
<dbReference type="Gene3D" id="3.40.50.150">
    <property type="entry name" value="Vaccinia Virus protein VP39"/>
    <property type="match status" value="1"/>
</dbReference>
<dbReference type="HAMAP" id="MF_01590">
    <property type="entry name" value="tRNA_carboxymethyltr_CmoB"/>
    <property type="match status" value="1"/>
</dbReference>
<dbReference type="InterPro" id="IPR010017">
    <property type="entry name" value="CmoB"/>
</dbReference>
<dbReference type="InterPro" id="IPR027555">
    <property type="entry name" value="Mo5U34_MeTrfas-like"/>
</dbReference>
<dbReference type="InterPro" id="IPR029063">
    <property type="entry name" value="SAM-dependent_MTases_sf"/>
</dbReference>
<dbReference type="NCBIfam" id="NF011650">
    <property type="entry name" value="PRK15068.1"/>
    <property type="match status" value="1"/>
</dbReference>
<dbReference type="NCBIfam" id="TIGR00452">
    <property type="entry name" value="tRNA 5-methoxyuridine(34)/uridine 5-oxyacetic acid(34) synthase CmoB"/>
    <property type="match status" value="1"/>
</dbReference>
<dbReference type="PANTHER" id="PTHR43464">
    <property type="entry name" value="METHYLTRANSFERASE"/>
    <property type="match status" value="1"/>
</dbReference>
<dbReference type="PANTHER" id="PTHR43464:SF95">
    <property type="entry name" value="TRNA U34 CARBOXYMETHYLTRANSFERASE"/>
    <property type="match status" value="1"/>
</dbReference>
<dbReference type="Pfam" id="PF08003">
    <property type="entry name" value="Methyltransf_9"/>
    <property type="match status" value="1"/>
</dbReference>
<dbReference type="SUPFAM" id="SSF53335">
    <property type="entry name" value="S-adenosyl-L-methionine-dependent methyltransferases"/>
    <property type="match status" value="1"/>
</dbReference>